<reference key="1">
    <citation type="journal article" date="2005" name="Genome Res.">
        <title>Comparative genome sequencing of Drosophila pseudoobscura: chromosomal, gene, and cis-element evolution.</title>
        <authorList>
            <person name="Richards S."/>
            <person name="Liu Y."/>
            <person name="Bettencourt B.R."/>
            <person name="Hradecky P."/>
            <person name="Letovsky S."/>
            <person name="Nielsen R."/>
            <person name="Thornton K."/>
            <person name="Hubisz M.J."/>
            <person name="Chen R."/>
            <person name="Meisel R.P."/>
            <person name="Couronne O."/>
            <person name="Hua S."/>
            <person name="Smith M.A."/>
            <person name="Zhang P."/>
            <person name="Liu J."/>
            <person name="Bussemaker H.J."/>
            <person name="van Batenburg M.F."/>
            <person name="Howells S.L."/>
            <person name="Scherer S.E."/>
            <person name="Sodergren E."/>
            <person name="Matthews B.B."/>
            <person name="Crosby M.A."/>
            <person name="Schroeder A.J."/>
            <person name="Ortiz-Barrientos D."/>
            <person name="Rives C.M."/>
            <person name="Metzker M.L."/>
            <person name="Muzny D.M."/>
            <person name="Scott G."/>
            <person name="Steffen D."/>
            <person name="Wheeler D.A."/>
            <person name="Worley K.C."/>
            <person name="Havlak P."/>
            <person name="Durbin K.J."/>
            <person name="Egan A."/>
            <person name="Gill R."/>
            <person name="Hume J."/>
            <person name="Morgan M.B."/>
            <person name="Miner G."/>
            <person name="Hamilton C."/>
            <person name="Huang Y."/>
            <person name="Waldron L."/>
            <person name="Verduzco D."/>
            <person name="Clerc-Blankenburg K.P."/>
            <person name="Dubchak I."/>
            <person name="Noor M.A.F."/>
            <person name="Anderson W."/>
            <person name="White K.P."/>
            <person name="Clark A.G."/>
            <person name="Schaeffer S.W."/>
            <person name="Gelbart W.M."/>
            <person name="Weinstock G.M."/>
            <person name="Gibbs R.A."/>
        </authorList>
    </citation>
    <scope>NUCLEOTIDE SEQUENCE [LARGE SCALE GENOMIC DNA]</scope>
    <source>
        <strain>MV2-25 / Tucson 14011-0121.94</strain>
    </source>
</reference>
<name>BOP1_DROPS</name>
<comment type="function">
    <text evidence="1">Required for maturation of ribosomal RNAs and formation of the large ribosomal subunit.</text>
</comment>
<comment type="subcellular location">
    <subcellularLocation>
        <location evidence="1">Nucleus</location>
        <location evidence="1">Nucleolus</location>
    </subcellularLocation>
    <subcellularLocation>
        <location evidence="1">Nucleus</location>
        <location evidence="1">Nucleoplasm</location>
    </subcellularLocation>
</comment>
<comment type="similarity">
    <text evidence="1">Belongs to the WD repeat BOP1/ERB1 family.</text>
</comment>
<proteinExistence type="inferred from homology"/>
<dbReference type="EMBL" id="CM000071">
    <property type="protein sequence ID" value="EAL26366.1"/>
    <property type="molecule type" value="Genomic_DNA"/>
</dbReference>
<dbReference type="RefSeq" id="XP_001361787.1">
    <property type="nucleotide sequence ID" value="XM_001361750.4"/>
</dbReference>
<dbReference type="SMR" id="Q28XF0"/>
<dbReference type="FunCoup" id="Q28XF0">
    <property type="interactions" value="1379"/>
</dbReference>
<dbReference type="STRING" id="46245.Q28XF0"/>
<dbReference type="EnsemblMetazoa" id="FBtr0280143">
    <property type="protein sequence ID" value="FBpp0278581"/>
    <property type="gene ID" value="FBgn0078611"/>
</dbReference>
<dbReference type="KEGG" id="dpo:4805377"/>
<dbReference type="eggNOG" id="KOG0650">
    <property type="taxonomic scope" value="Eukaryota"/>
</dbReference>
<dbReference type="HOGENOM" id="CLU_011390_2_0_1"/>
<dbReference type="InParanoid" id="Q28XF0"/>
<dbReference type="OMA" id="MRPAKGE"/>
<dbReference type="PhylomeDB" id="Q28XF0"/>
<dbReference type="Proteomes" id="UP000001819">
    <property type="component" value="Chromosome 3"/>
</dbReference>
<dbReference type="Bgee" id="FBgn0078611">
    <property type="expression patterns" value="Expressed in female reproductive system and 3 other cell types or tissues"/>
</dbReference>
<dbReference type="GO" id="GO:0005654">
    <property type="term" value="C:nucleoplasm"/>
    <property type="evidence" value="ECO:0007669"/>
    <property type="project" value="UniProtKB-SubCell"/>
</dbReference>
<dbReference type="GO" id="GO:0070545">
    <property type="term" value="C:PeBoW complex"/>
    <property type="evidence" value="ECO:0007669"/>
    <property type="project" value="TreeGrafter"/>
</dbReference>
<dbReference type="GO" id="GO:0030687">
    <property type="term" value="C:preribosome, large subunit precursor"/>
    <property type="evidence" value="ECO:0007669"/>
    <property type="project" value="UniProtKB-UniRule"/>
</dbReference>
<dbReference type="GO" id="GO:0043021">
    <property type="term" value="F:ribonucleoprotein complex binding"/>
    <property type="evidence" value="ECO:0007669"/>
    <property type="project" value="UniProtKB-UniRule"/>
</dbReference>
<dbReference type="GO" id="GO:0000466">
    <property type="term" value="P:maturation of 5.8S rRNA from tricistronic rRNA transcript (SSU-rRNA, 5.8S rRNA, LSU-rRNA)"/>
    <property type="evidence" value="ECO:0007669"/>
    <property type="project" value="UniProtKB-UniRule"/>
</dbReference>
<dbReference type="GO" id="GO:0000463">
    <property type="term" value="P:maturation of LSU-rRNA from tricistronic rRNA transcript (SSU-rRNA, 5.8S rRNA, LSU-rRNA)"/>
    <property type="evidence" value="ECO:0007669"/>
    <property type="project" value="UniProtKB-UniRule"/>
</dbReference>
<dbReference type="CDD" id="cd00200">
    <property type="entry name" value="WD40"/>
    <property type="match status" value="1"/>
</dbReference>
<dbReference type="FunFam" id="2.130.10.10:FF:000061">
    <property type="entry name" value="Ribosome biogenesis protein BOP1 homolog"/>
    <property type="match status" value="1"/>
</dbReference>
<dbReference type="Gene3D" id="2.130.10.10">
    <property type="entry name" value="YVTN repeat-like/Quinoprotein amine dehydrogenase"/>
    <property type="match status" value="1"/>
</dbReference>
<dbReference type="HAMAP" id="MF_03027">
    <property type="entry name" value="BOP1"/>
    <property type="match status" value="1"/>
</dbReference>
<dbReference type="InterPro" id="IPR028598">
    <property type="entry name" value="BOP1/Erb1"/>
</dbReference>
<dbReference type="InterPro" id="IPR012953">
    <property type="entry name" value="BOP1_N_dom"/>
</dbReference>
<dbReference type="InterPro" id="IPR015943">
    <property type="entry name" value="WD40/YVTN_repeat-like_dom_sf"/>
</dbReference>
<dbReference type="InterPro" id="IPR019775">
    <property type="entry name" value="WD40_repeat_CS"/>
</dbReference>
<dbReference type="InterPro" id="IPR036322">
    <property type="entry name" value="WD40_repeat_dom_sf"/>
</dbReference>
<dbReference type="InterPro" id="IPR001680">
    <property type="entry name" value="WD40_rpt"/>
</dbReference>
<dbReference type="PANTHER" id="PTHR17605:SF0">
    <property type="entry name" value="RIBOSOME BIOGENESIS PROTEIN BOP1"/>
    <property type="match status" value="1"/>
</dbReference>
<dbReference type="PANTHER" id="PTHR17605">
    <property type="entry name" value="RIBOSOME BIOGENESIS PROTEIN BOP1 BLOCK OF PROLIFERATION 1 PROTEIN"/>
    <property type="match status" value="1"/>
</dbReference>
<dbReference type="Pfam" id="PF08145">
    <property type="entry name" value="BOP1NT"/>
    <property type="match status" value="1"/>
</dbReference>
<dbReference type="Pfam" id="PF00400">
    <property type="entry name" value="WD40"/>
    <property type="match status" value="3"/>
</dbReference>
<dbReference type="SMART" id="SM01035">
    <property type="entry name" value="BOP1NT"/>
    <property type="match status" value="1"/>
</dbReference>
<dbReference type="SMART" id="SM00320">
    <property type="entry name" value="WD40"/>
    <property type="match status" value="7"/>
</dbReference>
<dbReference type="SUPFAM" id="SSF50978">
    <property type="entry name" value="WD40 repeat-like"/>
    <property type="match status" value="1"/>
</dbReference>
<dbReference type="PROSITE" id="PS00678">
    <property type="entry name" value="WD_REPEATS_1"/>
    <property type="match status" value="1"/>
</dbReference>
<dbReference type="PROSITE" id="PS50082">
    <property type="entry name" value="WD_REPEATS_2"/>
    <property type="match status" value="1"/>
</dbReference>
<dbReference type="PROSITE" id="PS50294">
    <property type="entry name" value="WD_REPEATS_REGION"/>
    <property type="match status" value="2"/>
</dbReference>
<evidence type="ECO:0000255" key="1">
    <source>
        <dbReference type="HAMAP-Rule" id="MF_03027"/>
    </source>
</evidence>
<evidence type="ECO:0000256" key="2">
    <source>
        <dbReference type="SAM" id="MobiDB-lite"/>
    </source>
</evidence>
<sequence>MTKKLTIKRKVKEPEPQNEAPDSHESSDNEEEEEEDLLQAVKDPGEDSTDDEGIDQEYQTDSSEDLEFESDEEGNYLGRKGAEGSSGDDDEESAEDEEEEDDADAKKSSKNNDEEAATTSKSIKKSQEKPTSSNKVVPVVPARDPSKVEYADSDTSDEEDIRNTVGNIPMHWYDEYKHIGYDWDAKKIVKPPKGDQIDDFLRKIEDPNFWRTVKDPLTGQEVLLTDADIALIKRINSGRIPNEEHDEYAPWIEWFTSEVEKMPIKNVPDHKRSFLPSGSEKKTVSRMVHALKMGWMKTTEEVQREKQEKRGPKFYMLWETDTSREQMRRIHDPVSAPKRDLPGHAESYNPPPEYLFDEKEAKEWHKLKDEPHRRKLHFMPQKFKSLREVPAYSRYLRERFLRCLDLYLCPRAKRVKLNIDAEYLIPKLPSPRDLQPFPTVESLVYRGHTDLVRSVSVEPKGEYLVSGSDDKTVKIWEIATGRCIRTIETEDVVRCVAWCPNAKLSIIAVATGSRLLLVNPKVGDKLLVKKTDDLLAEAPVLDVIENERIKTAVQWANAEPADQEKGVRVIITHFKPIRQVTWHGRGDYLATVMPEGANRSALIHQLSKRRSQIPFSKSKGLIQCVLFHPVKPCFFVATQHNIRIYDLVKQELIKKLLTNSKWISGMSIHPKGDNLLVSTYDKKMLWFDLDLSTKPYQTMRLHRNAVRSVAFHLRYPLFASGSDDQAVIVSHGMVYNDLLQNPLIVPLKKLQTHEKREEFGVLDVNWHPVQPWVFSTGADCTIRLFT</sequence>
<accession>Q28XF0</accession>
<organism>
    <name type="scientific">Drosophila pseudoobscura pseudoobscura</name>
    <name type="common">Fruit fly</name>
    <dbReference type="NCBI Taxonomy" id="46245"/>
    <lineage>
        <taxon>Eukaryota</taxon>
        <taxon>Metazoa</taxon>
        <taxon>Ecdysozoa</taxon>
        <taxon>Arthropoda</taxon>
        <taxon>Hexapoda</taxon>
        <taxon>Insecta</taxon>
        <taxon>Pterygota</taxon>
        <taxon>Neoptera</taxon>
        <taxon>Endopterygota</taxon>
        <taxon>Diptera</taxon>
        <taxon>Brachycera</taxon>
        <taxon>Muscomorpha</taxon>
        <taxon>Ephydroidea</taxon>
        <taxon>Drosophilidae</taxon>
        <taxon>Drosophila</taxon>
        <taxon>Sophophora</taxon>
    </lineage>
</organism>
<protein>
    <recommendedName>
        <fullName evidence="1">Ribosome biogenesis protein BOP1 homolog</fullName>
    </recommendedName>
</protein>
<gene>
    <name type="ORF">GA18610</name>
</gene>
<keyword id="KW-0539">Nucleus</keyword>
<keyword id="KW-1185">Reference proteome</keyword>
<keyword id="KW-0677">Repeat</keyword>
<keyword id="KW-0690">Ribosome biogenesis</keyword>
<keyword id="KW-0698">rRNA processing</keyword>
<keyword id="KW-0853">WD repeat</keyword>
<feature type="chain" id="PRO_0000370400" description="Ribosome biogenesis protein BOP1 homolog">
    <location>
        <begin position="1"/>
        <end position="786"/>
    </location>
</feature>
<feature type="repeat" description="WD 1">
    <location>
        <begin position="447"/>
        <end position="488"/>
    </location>
</feature>
<feature type="repeat" description="WD 2">
    <location>
        <begin position="490"/>
        <end position="528"/>
    </location>
</feature>
<feature type="repeat" description="WD 3">
    <location>
        <begin position="572"/>
        <end position="614"/>
    </location>
</feature>
<feature type="repeat" description="WD 4">
    <location>
        <begin position="617"/>
        <end position="655"/>
    </location>
</feature>
<feature type="repeat" description="WD 5">
    <location>
        <begin position="658"/>
        <end position="697"/>
    </location>
</feature>
<feature type="repeat" description="WD 6">
    <location>
        <begin position="701"/>
        <end position="740"/>
    </location>
</feature>
<feature type="repeat" description="WD 7">
    <location>
        <begin position="756"/>
        <end position="786"/>
    </location>
</feature>
<feature type="region of interest" description="Disordered" evidence="2">
    <location>
        <begin position="1"/>
        <end position="161"/>
    </location>
</feature>
<feature type="compositionally biased region" description="Basic residues" evidence="2">
    <location>
        <begin position="1"/>
        <end position="11"/>
    </location>
</feature>
<feature type="compositionally biased region" description="Acidic residues" evidence="2">
    <location>
        <begin position="28"/>
        <end position="37"/>
    </location>
</feature>
<feature type="compositionally biased region" description="Acidic residues" evidence="2">
    <location>
        <begin position="46"/>
        <end position="55"/>
    </location>
</feature>
<feature type="compositionally biased region" description="Acidic residues" evidence="2">
    <location>
        <begin position="62"/>
        <end position="74"/>
    </location>
</feature>
<feature type="compositionally biased region" description="Acidic residues" evidence="2">
    <location>
        <begin position="86"/>
        <end position="103"/>
    </location>
</feature>
<feature type="compositionally biased region" description="Basic and acidic residues" evidence="2">
    <location>
        <begin position="104"/>
        <end position="113"/>
    </location>
</feature>
<feature type="compositionally biased region" description="Acidic residues" evidence="2">
    <location>
        <begin position="151"/>
        <end position="160"/>
    </location>
</feature>